<sequence length="365" mass="42248">MDIIETAKLEGHLESQTNDSTNTYTSPTEAVEEEGKNGKGKPKTLSNGLRKGAKKYPDYIQISMPNDSKNKFPLEWWKTGIAFVYALFNLILTTVMITVVHERVPPKELSPPLPDKFFDYFDRVKWAFSVSEINGMVLVGLWITQWLFLRYKSIVGRRFFFIMGTLYLYRCITMYVTTLPVPGMHFQCAPKLNGDSQAKIQRILRLISGGGLSITGSHILCGDFLFSGHTVVLTLTYLFIKEYSPRHFWWYHLVCWLLSAAGIICILVAHEHYTVDVIIAYYITTRLFWWYHSMANEKNLKVSSQTNFLSRAWWFPIFYFFEKNVQGSIPCCFSWPLSWPPGCFKSSCRKYSRVQKIGEDNEKST</sequence>
<organism evidence="12">
    <name type="scientific">Mus musculus</name>
    <name type="common">Mouse</name>
    <dbReference type="NCBI Taxonomy" id="10090"/>
    <lineage>
        <taxon>Eukaryota</taxon>
        <taxon>Metazoa</taxon>
        <taxon>Chordata</taxon>
        <taxon>Craniata</taxon>
        <taxon>Vertebrata</taxon>
        <taxon>Euteleostomi</taxon>
        <taxon>Mammalia</taxon>
        <taxon>Eutheria</taxon>
        <taxon>Euarchontoglires</taxon>
        <taxon>Glires</taxon>
        <taxon>Rodentia</taxon>
        <taxon>Myomorpha</taxon>
        <taxon>Muroidea</taxon>
        <taxon>Muridae</taxon>
        <taxon>Murinae</taxon>
        <taxon>Mus</taxon>
        <taxon>Mus</taxon>
    </lineage>
</organism>
<dbReference type="EC" id="2.7.8.27" evidence="7"/>
<dbReference type="EMBL" id="AK016659">
    <property type="protein sequence ID" value="BAB30364.2"/>
    <property type="molecule type" value="mRNA"/>
</dbReference>
<dbReference type="EMBL" id="BC117782">
    <property type="protein sequence ID" value="AAI17783.1"/>
    <property type="molecule type" value="mRNA"/>
</dbReference>
<dbReference type="CCDS" id="CCDS17843.1"/>
<dbReference type="RefSeq" id="NP_001366511.1">
    <property type="nucleotide sequence ID" value="NM_001379582.1"/>
</dbReference>
<dbReference type="RefSeq" id="NP_001366512.1">
    <property type="nucleotide sequence ID" value="NM_001379583.1"/>
</dbReference>
<dbReference type="RefSeq" id="NP_001366513.1">
    <property type="nucleotide sequence ID" value="NM_001379584.1"/>
</dbReference>
<dbReference type="RefSeq" id="NP_001366514.1">
    <property type="nucleotide sequence ID" value="NM_001379585.1"/>
</dbReference>
<dbReference type="RefSeq" id="NP_001366515.1">
    <property type="nucleotide sequence ID" value="NM_001379586.1"/>
</dbReference>
<dbReference type="RefSeq" id="NP_001366516.1">
    <property type="nucleotide sequence ID" value="NM_001379587.1"/>
</dbReference>
<dbReference type="RefSeq" id="NP_083219.2">
    <property type="nucleotide sequence ID" value="NM_028943.5"/>
</dbReference>
<dbReference type="RefSeq" id="XP_006502256.1">
    <property type="nucleotide sequence ID" value="XM_006502193.2"/>
</dbReference>
<dbReference type="RefSeq" id="XP_006502257.1">
    <property type="nucleotide sequence ID" value="XM_006502194.3"/>
</dbReference>
<dbReference type="RefSeq" id="XP_006502259.1">
    <property type="nucleotide sequence ID" value="XM_006502196.3"/>
</dbReference>
<dbReference type="RefSeq" id="XP_006502260.1">
    <property type="nucleotide sequence ID" value="XM_006502197.3"/>
</dbReference>
<dbReference type="RefSeq" id="XP_006502262.1">
    <property type="nucleotide sequence ID" value="XM_006502199.3"/>
</dbReference>
<dbReference type="RefSeq" id="XP_011238551.1">
    <property type="nucleotide sequence ID" value="XM_011240249.4"/>
</dbReference>
<dbReference type="RefSeq" id="XP_011238552.1">
    <property type="nucleotide sequence ID" value="XM_011240250.2"/>
</dbReference>
<dbReference type="SMR" id="Q9D4B1"/>
<dbReference type="BioGRID" id="216751">
    <property type="interactions" value="1"/>
</dbReference>
<dbReference type="FunCoup" id="Q9D4B1">
    <property type="interactions" value="580"/>
</dbReference>
<dbReference type="STRING" id="10090.ENSMUSP00000087713"/>
<dbReference type="BindingDB" id="Q9D4B1"/>
<dbReference type="ChEMBL" id="CHEMBL4523444"/>
<dbReference type="iPTMnet" id="Q9D4B1"/>
<dbReference type="PhosphoSitePlus" id="Q9D4B1"/>
<dbReference type="PaxDb" id="10090-ENSMUSP00000087713"/>
<dbReference type="ProteomicsDB" id="261462"/>
<dbReference type="Antibodypedia" id="15282">
    <property type="antibodies" value="243 antibodies from 24 providers"/>
</dbReference>
<dbReference type="DNASU" id="74442"/>
<dbReference type="Ensembl" id="ENSMUST00000090246.5">
    <property type="protein sequence ID" value="ENSMUSP00000087713.5"/>
    <property type="gene ID" value="ENSMUSG00000050931.8"/>
</dbReference>
<dbReference type="GeneID" id="74442"/>
<dbReference type="KEGG" id="mmu:74442"/>
<dbReference type="UCSC" id="uc008rjq.2">
    <property type="organism name" value="mouse"/>
</dbReference>
<dbReference type="AGR" id="MGI:1921692"/>
<dbReference type="CTD" id="166929"/>
<dbReference type="MGI" id="MGI:1921692">
    <property type="gene designation" value="Sgms2"/>
</dbReference>
<dbReference type="VEuPathDB" id="HostDB:ENSMUSG00000050931"/>
<dbReference type="eggNOG" id="KOG3058">
    <property type="taxonomic scope" value="Eukaryota"/>
</dbReference>
<dbReference type="GeneTree" id="ENSGT00940000157370"/>
<dbReference type="HOGENOM" id="CLU_027104_0_1_1"/>
<dbReference type="InParanoid" id="Q9D4B1"/>
<dbReference type="OMA" id="SKFPLEW"/>
<dbReference type="OrthoDB" id="422827at2759"/>
<dbReference type="PhylomeDB" id="Q9D4B1"/>
<dbReference type="TreeFam" id="TF314547"/>
<dbReference type="BRENDA" id="2.7.8.27">
    <property type="organism ID" value="3474"/>
</dbReference>
<dbReference type="Reactome" id="R-MMU-1660661">
    <property type="pathway name" value="Sphingolipid de novo biosynthesis"/>
</dbReference>
<dbReference type="BioGRID-ORCS" id="74442">
    <property type="hits" value="2 hits in 78 CRISPR screens"/>
</dbReference>
<dbReference type="ChiTaRS" id="Sgms2">
    <property type="organism name" value="mouse"/>
</dbReference>
<dbReference type="PRO" id="PR:Q9D4B1"/>
<dbReference type="Proteomes" id="UP000000589">
    <property type="component" value="Chromosome 3"/>
</dbReference>
<dbReference type="RNAct" id="Q9D4B1">
    <property type="molecule type" value="protein"/>
</dbReference>
<dbReference type="Bgee" id="ENSMUSG00000050931">
    <property type="expression patterns" value="Expressed in granulocyte and 91 other cell types or tissues"/>
</dbReference>
<dbReference type="ExpressionAtlas" id="Q9D4B1">
    <property type="expression patterns" value="baseline and differential"/>
</dbReference>
<dbReference type="GO" id="GO:0005794">
    <property type="term" value="C:Golgi apparatus"/>
    <property type="evidence" value="ECO:0000266"/>
    <property type="project" value="MGI"/>
</dbReference>
<dbReference type="GO" id="GO:0000139">
    <property type="term" value="C:Golgi membrane"/>
    <property type="evidence" value="ECO:0000250"/>
    <property type="project" value="UniProtKB"/>
</dbReference>
<dbReference type="GO" id="GO:0005654">
    <property type="term" value="C:nucleoplasm"/>
    <property type="evidence" value="ECO:0007669"/>
    <property type="project" value="Ensembl"/>
</dbReference>
<dbReference type="GO" id="GO:0005886">
    <property type="term" value="C:plasma membrane"/>
    <property type="evidence" value="ECO:0000250"/>
    <property type="project" value="UniProtKB"/>
</dbReference>
<dbReference type="GO" id="GO:0047493">
    <property type="term" value="F:ceramide cholinephosphotransferase activity"/>
    <property type="evidence" value="ECO:0000250"/>
    <property type="project" value="UniProtKB"/>
</dbReference>
<dbReference type="GO" id="GO:0002950">
    <property type="term" value="F:ceramide phosphoethanolamine synthase activity"/>
    <property type="evidence" value="ECO:0000315"/>
    <property type="project" value="MGI"/>
</dbReference>
<dbReference type="GO" id="GO:0016301">
    <property type="term" value="F:kinase activity"/>
    <property type="evidence" value="ECO:0007669"/>
    <property type="project" value="UniProtKB-KW"/>
</dbReference>
<dbReference type="GO" id="GO:0033188">
    <property type="term" value="F:sphingomyelin synthase activity"/>
    <property type="evidence" value="ECO:0000314"/>
    <property type="project" value="UniProtKB"/>
</dbReference>
<dbReference type="GO" id="GO:0046513">
    <property type="term" value="P:ceramide biosynthetic process"/>
    <property type="evidence" value="ECO:0000315"/>
    <property type="project" value="MGI"/>
</dbReference>
<dbReference type="GO" id="GO:1905373">
    <property type="term" value="P:ceramide phosphoethanolamine biosynthetic process"/>
    <property type="evidence" value="ECO:0000315"/>
    <property type="project" value="MGI"/>
</dbReference>
<dbReference type="GO" id="GO:0030500">
    <property type="term" value="P:regulation of bone mineralization"/>
    <property type="evidence" value="ECO:0000250"/>
    <property type="project" value="UniProtKB"/>
</dbReference>
<dbReference type="GO" id="GO:0006686">
    <property type="term" value="P:sphingomyelin biosynthetic process"/>
    <property type="evidence" value="ECO:0000315"/>
    <property type="project" value="UniProtKB"/>
</dbReference>
<dbReference type="CDD" id="cd01610">
    <property type="entry name" value="PAP2_like"/>
    <property type="match status" value="1"/>
</dbReference>
<dbReference type="InterPro" id="IPR045221">
    <property type="entry name" value="Sphingomyelin_synth-like"/>
</dbReference>
<dbReference type="InterPro" id="IPR025749">
    <property type="entry name" value="Sphingomyelin_synth-like_dom"/>
</dbReference>
<dbReference type="PANTHER" id="PTHR21290:SF24">
    <property type="entry name" value="PHOSPHATIDYLCHOLINE:CERAMIDE CHOLINEPHOSPHOTRANSFERASE 2"/>
    <property type="match status" value="1"/>
</dbReference>
<dbReference type="PANTHER" id="PTHR21290">
    <property type="entry name" value="SPHINGOMYELIN SYNTHETASE"/>
    <property type="match status" value="1"/>
</dbReference>
<dbReference type="Pfam" id="PF14360">
    <property type="entry name" value="PAP2_C"/>
    <property type="match status" value="1"/>
</dbReference>
<protein>
    <recommendedName>
        <fullName>Phosphatidylcholine:ceramide cholinephosphotransferase 2</fullName>
        <ecNumber evidence="7">2.7.8.27</ecNumber>
    </recommendedName>
    <alternativeName>
        <fullName>Sphingomyelin synthase 2</fullName>
        <shortName>Sms2</shortName>
    </alternativeName>
</protein>
<comment type="function">
    <text evidence="2 5 6 7 8">Sphingomyelin synthase that primarily contributes to sphingomyelin synthesis and homeostasis at the plasma membrane (PubMed:19590047, PubMed:21844222, PubMed:22580896). Catalyzes the reversible transfer of phosphocholine moiety in sphingomyelin biosynthesis: in the forward reaction transfers phosphocholine head group of phosphatidylcholine (PC) on to ceramide (CER) to form ceramide phosphocholine (sphingomyelin, SM) and diacylglycerol (DAG) as by-product, and in the reverse reaction transfers phosphocholine from SM to DAG to form PC and CER. The direction of the reaction appears to depend on the levels of CER and DAG in the plasma membrane. Does not use free phosphorylcholine or CDP-choline as donors (By similarity). Can also transfer phosphoethanolamine head group of phosphatidylethanolamine (PE) on to ceramide (CER) to form ceramide phosphoethanolamine (CPE) (PubMed:25605874). Regulates receptor-mediated signal transduction via mitogenic DAG and proapoptotic CER, as well as via SM, a structural component of membrane rafts that serve as platforms for signal transduction and protein sorting (PubMed:19590047, PubMed:21844222). To a lesser extent, plays a role in secretory transport via regulation of DAG pool at the Golgi apparatus and its downstream effects on PRKD1. Required for normal bone matrix mineralization (By similarity).</text>
</comment>
<comment type="catalytic activity">
    <reaction evidence="7">
        <text>an N-acylsphing-4-enine + a 1,2-diacyl-sn-glycero-3-phosphocholine = a sphingomyelin + a 1,2-diacyl-sn-glycerol</text>
        <dbReference type="Rhea" id="RHEA:18765"/>
        <dbReference type="ChEBI" id="CHEBI:17636"/>
        <dbReference type="ChEBI" id="CHEBI:17815"/>
        <dbReference type="ChEBI" id="CHEBI:52639"/>
        <dbReference type="ChEBI" id="CHEBI:57643"/>
        <dbReference type="EC" id="2.7.8.27"/>
    </reaction>
    <physiologicalReaction direction="left-to-right" evidence="11">
        <dbReference type="Rhea" id="RHEA:18766"/>
    </physiologicalReaction>
    <physiologicalReaction direction="right-to-left" evidence="2">
        <dbReference type="Rhea" id="RHEA:18767"/>
    </physiologicalReaction>
</comment>
<comment type="catalytic activity">
    <reaction evidence="2">
        <text>an N-acylsphinganine + a 1,2-diacyl-sn-glycero-3-phosphocholine = an N-acylsphinganine-1-phosphocholine + a 1,2-diacyl-sn-glycerol</text>
        <dbReference type="Rhea" id="RHEA:44620"/>
        <dbReference type="ChEBI" id="CHEBI:17815"/>
        <dbReference type="ChEBI" id="CHEBI:31488"/>
        <dbReference type="ChEBI" id="CHEBI:57643"/>
        <dbReference type="ChEBI" id="CHEBI:67090"/>
    </reaction>
    <physiologicalReaction direction="left-to-right" evidence="2">
        <dbReference type="Rhea" id="RHEA:44621"/>
    </physiologicalReaction>
    <physiologicalReaction direction="right-to-left" evidence="2">
        <dbReference type="Rhea" id="RHEA:44622"/>
    </physiologicalReaction>
</comment>
<comment type="catalytic activity">
    <reaction evidence="2">
        <text>an N-acyl-(4R)-4-hydroxysphinganine + a 1,2-diacyl-sn-glycero-3-phosphocholine = an N-acyl-(4R)-4-hydroxysphinganine-phosphocholine + a 1,2-diacyl-sn-glycerol</text>
        <dbReference type="Rhea" id="RHEA:42152"/>
        <dbReference type="ChEBI" id="CHEBI:17815"/>
        <dbReference type="ChEBI" id="CHEBI:31998"/>
        <dbReference type="ChEBI" id="CHEBI:57643"/>
        <dbReference type="ChEBI" id="CHEBI:78651"/>
    </reaction>
    <physiologicalReaction direction="left-to-right" evidence="2">
        <dbReference type="Rhea" id="RHEA:42153"/>
    </physiologicalReaction>
    <physiologicalReaction direction="right-to-left" evidence="2">
        <dbReference type="Rhea" id="RHEA:42154"/>
    </physiologicalReaction>
</comment>
<comment type="catalytic activity">
    <reaction evidence="8">
        <text>an N-acylsphing-4-enine + a 1,2-diacyl-sn-glycero-3-phosphoethanolamine = an N-acylsphing-4-enine 1-phosphoethanolamine + a 1,2-diacyl-sn-glycerol</text>
        <dbReference type="Rhea" id="RHEA:36079"/>
        <dbReference type="ChEBI" id="CHEBI:17815"/>
        <dbReference type="ChEBI" id="CHEBI:52639"/>
        <dbReference type="ChEBI" id="CHEBI:64612"/>
        <dbReference type="ChEBI" id="CHEBI:73203"/>
    </reaction>
    <physiologicalReaction direction="left-to-right" evidence="8">
        <dbReference type="Rhea" id="RHEA:36080"/>
    </physiologicalReaction>
</comment>
<comment type="catalytic activity">
    <reaction evidence="2">
        <text>an N-acylsphinganine + a 1,2-diacyl-sn-glycero-3-phosphoethanolamine = an N-acylsphinganine-1-phosphoethanolamine + a 1,2-diacyl-sn-glycerol</text>
        <dbReference type="Rhea" id="RHEA:42136"/>
        <dbReference type="ChEBI" id="CHEBI:17815"/>
        <dbReference type="ChEBI" id="CHEBI:31488"/>
        <dbReference type="ChEBI" id="CHEBI:64612"/>
        <dbReference type="ChEBI" id="CHEBI:78655"/>
    </reaction>
    <physiologicalReaction direction="left-to-right" evidence="2">
        <dbReference type="Rhea" id="RHEA:42137"/>
    </physiologicalReaction>
</comment>
<comment type="catalytic activity">
    <reaction evidence="2">
        <text>an N-acyl-(4R)-4-hydroxysphinganine + a 1,2-diacyl-sn-glycero-3-phosphoethanolamine = an N-acyl-(4R)-4-hydroxysphinganine-1-phosphoethanolamine + a 1,2-diacyl-sn-glycerol</text>
        <dbReference type="Rhea" id="RHEA:42148"/>
        <dbReference type="ChEBI" id="CHEBI:17815"/>
        <dbReference type="ChEBI" id="CHEBI:31998"/>
        <dbReference type="ChEBI" id="CHEBI:64612"/>
        <dbReference type="ChEBI" id="CHEBI:78657"/>
    </reaction>
    <physiologicalReaction direction="left-to-right" evidence="2">
        <dbReference type="Rhea" id="RHEA:42149"/>
    </physiologicalReaction>
</comment>
<comment type="catalytic activity">
    <reaction evidence="2">
        <text>1,2-dihexadecanoyl-sn-glycero-3-phosphocholine + an N-acylsphing-4-enine = 1,2-dihexadecanoyl-sn-glycerol + a sphingomyelin</text>
        <dbReference type="Rhea" id="RHEA:43324"/>
        <dbReference type="ChEBI" id="CHEBI:17636"/>
        <dbReference type="ChEBI" id="CHEBI:52639"/>
        <dbReference type="ChEBI" id="CHEBI:72999"/>
        <dbReference type="ChEBI" id="CHEBI:82929"/>
    </reaction>
    <physiologicalReaction direction="left-to-right" evidence="2">
        <dbReference type="Rhea" id="RHEA:43325"/>
    </physiologicalReaction>
    <physiologicalReaction direction="right-to-left" evidence="2">
        <dbReference type="Rhea" id="RHEA:43326"/>
    </physiologicalReaction>
</comment>
<comment type="catalytic activity">
    <reaction evidence="2">
        <text>1-(9Z-octadecenoyl)-2-acyl-sn-3-glycerol + a sphingomyelin = a 1-(9Z-octadecenoyl)-2-acyl-sn-glycero-3-phosphocholine + an N-acylsphing-4-enine</text>
        <dbReference type="Rhea" id="RHEA:43320"/>
        <dbReference type="ChEBI" id="CHEBI:17636"/>
        <dbReference type="ChEBI" id="CHEBI:52639"/>
        <dbReference type="ChEBI" id="CHEBI:78421"/>
        <dbReference type="ChEBI" id="CHEBI:82983"/>
    </reaction>
    <physiologicalReaction direction="left-to-right" evidence="2">
        <dbReference type="Rhea" id="RHEA:43321"/>
    </physiologicalReaction>
    <physiologicalReaction direction="right-to-left" evidence="2">
        <dbReference type="Rhea" id="RHEA:43322"/>
    </physiologicalReaction>
</comment>
<comment type="catalytic activity">
    <reaction evidence="2">
        <text>N-hexadecanoylsphinganine + a 1,2-diacyl-sn-glycero-3-phosphocholine = N-hexadecanoyl-sphinganine-1-phosphocholine + a 1,2-diacyl-sn-glycerol</text>
        <dbReference type="Rhea" id="RHEA:41796"/>
        <dbReference type="ChEBI" id="CHEBI:17815"/>
        <dbReference type="ChEBI" id="CHEBI:57643"/>
        <dbReference type="ChEBI" id="CHEBI:67042"/>
        <dbReference type="ChEBI" id="CHEBI:78647"/>
    </reaction>
    <physiologicalReaction direction="left-to-right" evidence="2">
        <dbReference type="Rhea" id="RHEA:41797"/>
    </physiologicalReaction>
    <physiologicalReaction direction="right-to-left" evidence="2">
        <dbReference type="Rhea" id="RHEA:41798"/>
    </physiologicalReaction>
</comment>
<comment type="catalytic activity">
    <reaction evidence="2">
        <text>N-hexadecanoyl-(4R)-hydroxysphinganine + a 1,2-diacyl-sn-glycero-3-phosphocholine = N-hexadecanoyl-(4R)-hydroxysphinganine-phosphocholine + a 1,2-diacyl-sn-glycerol</text>
        <dbReference type="Rhea" id="RHEA:42140"/>
        <dbReference type="ChEBI" id="CHEBI:17815"/>
        <dbReference type="ChEBI" id="CHEBI:57643"/>
        <dbReference type="ChEBI" id="CHEBI:65107"/>
        <dbReference type="ChEBI" id="CHEBI:78650"/>
    </reaction>
    <physiologicalReaction direction="left-to-right" evidence="2">
        <dbReference type="Rhea" id="RHEA:42141"/>
    </physiologicalReaction>
    <physiologicalReaction direction="right-to-left" evidence="2">
        <dbReference type="Rhea" id="RHEA:42142"/>
    </physiologicalReaction>
</comment>
<comment type="catalytic activity">
    <reaction evidence="2">
        <text>N-hexadecanoylsphinganine + a 1,2-diacyl-sn-glycero-3-phosphoethanolamine = N-hexadecanoyl-sphinganine-1-phosphoethanolamine + a 1,2-diacyl-sn-glycerol</text>
        <dbReference type="Rhea" id="RHEA:42128"/>
        <dbReference type="ChEBI" id="CHEBI:17815"/>
        <dbReference type="ChEBI" id="CHEBI:64612"/>
        <dbReference type="ChEBI" id="CHEBI:67042"/>
        <dbReference type="ChEBI" id="CHEBI:78654"/>
    </reaction>
    <physiologicalReaction direction="left-to-right" evidence="2">
        <dbReference type="Rhea" id="RHEA:42129"/>
    </physiologicalReaction>
</comment>
<comment type="catalytic activity">
    <reaction evidence="2">
        <text>N-hexadecanoyl-(4R)-hydroxysphinganine + a 1,2-diacyl-sn-glycero-3-phosphoethanolamine = N-hexadecanoyl-(4R)-hydroxysphinganine-1-phosphoethanolamine + a 1,2-diacyl-sn-glycerol</text>
        <dbReference type="Rhea" id="RHEA:42144"/>
        <dbReference type="ChEBI" id="CHEBI:17815"/>
        <dbReference type="ChEBI" id="CHEBI:64612"/>
        <dbReference type="ChEBI" id="CHEBI:65107"/>
        <dbReference type="ChEBI" id="CHEBI:78656"/>
    </reaction>
    <physiologicalReaction direction="left-to-right" evidence="2">
        <dbReference type="Rhea" id="RHEA:42145"/>
    </physiologicalReaction>
</comment>
<comment type="pathway">
    <text evidence="2">Sphingolipid metabolism.</text>
</comment>
<comment type="subcellular location">
    <subcellularLocation>
        <location evidence="2">Cell membrane</location>
        <topology evidence="3">Multi-pass membrane protein</topology>
    </subcellularLocation>
    <subcellularLocation>
        <location evidence="2">Golgi apparatus membrane</location>
        <topology evidence="3">Multi-pass membrane protein</topology>
    </subcellularLocation>
    <text evidence="2">Primarily localized at the plasma membrane with a small fraction at the Golgi apparatus.</text>
</comment>
<comment type="tissue specificity">
    <text evidence="5 9">Highest expression is detected in cortical bone, followed by vertebrae, kidney and liver. Expression levels are very low in spleen, muscle, heart, brown fat and thymus (PubMed:30779713). Expressed in macrophages.</text>
</comment>
<comment type="PTM">
    <text evidence="1">Palmitoylated on Cys-331, Cys-332, Cys-343 and Cys-348; which plays an important role in plasma membrane localization.</text>
</comment>
<comment type="disruption phenotype">
    <text evidence="5 6 7">Null mice are viable but exhibit increased cell membrane ceramide and decreased sphingomyelin levels. In both skeletal muscle and adipose tissue, there is a significant increase in glucose uptake. This leads to increased insulin sensitivity and ameliorated high-fat diet-induced obesity. There is blunted NFKB1- and MAP kinase-mediated responses to inflammatory stimuli and macrophages display increased cholesterol efflux into blood circulation. Liver SMS activity is markedly reduced (by about 80%) but only small change in macrophage SMS2 activity (16%). No change in glycosphingolipid levels in plasma. Atherosclerosis in SMS2(-/-)/LDLR(-/-) mice is significantly decreased.</text>
</comment>
<comment type="similarity">
    <text evidence="10">Belongs to the sphingomyelin synthase family.</text>
</comment>
<accession>Q9D4B1</accession>
<accession>Q149I0</accession>
<evidence type="ECO:0000250" key="1"/>
<evidence type="ECO:0000250" key="2">
    <source>
        <dbReference type="UniProtKB" id="Q8NHU3"/>
    </source>
</evidence>
<evidence type="ECO:0000255" key="3"/>
<evidence type="ECO:0000256" key="4">
    <source>
        <dbReference type="SAM" id="MobiDB-lite"/>
    </source>
</evidence>
<evidence type="ECO:0000269" key="5">
    <source>
    </source>
</evidence>
<evidence type="ECO:0000269" key="6">
    <source>
    </source>
</evidence>
<evidence type="ECO:0000269" key="7">
    <source>
    </source>
</evidence>
<evidence type="ECO:0000269" key="8">
    <source>
    </source>
</evidence>
<evidence type="ECO:0000269" key="9">
    <source>
    </source>
</evidence>
<evidence type="ECO:0000305" key="10"/>
<evidence type="ECO:0000305" key="11">
    <source>
    </source>
</evidence>
<evidence type="ECO:0000312" key="12">
    <source>
        <dbReference type="EMBL" id="BAB30364.2"/>
    </source>
</evidence>
<proteinExistence type="evidence at protein level"/>
<keyword id="KW-1003">Cell membrane</keyword>
<keyword id="KW-0333">Golgi apparatus</keyword>
<keyword id="KW-0418">Kinase</keyword>
<keyword id="KW-0443">Lipid metabolism</keyword>
<keyword id="KW-0449">Lipoprotein</keyword>
<keyword id="KW-0472">Membrane</keyword>
<keyword id="KW-0564">Palmitate</keyword>
<keyword id="KW-1185">Reference proteome</keyword>
<keyword id="KW-0746">Sphingolipid metabolism</keyword>
<keyword id="KW-0808">Transferase</keyword>
<keyword id="KW-0812">Transmembrane</keyword>
<keyword id="KW-1133">Transmembrane helix</keyword>
<gene>
    <name type="primary">Sgms2</name>
</gene>
<name>SMS2_MOUSE</name>
<feature type="chain" id="PRO_0000221073" description="Phosphatidylcholine:ceramide cholinephosphotransferase 2">
    <location>
        <begin position="1"/>
        <end position="365"/>
    </location>
</feature>
<feature type="transmembrane region" description="Helical" evidence="3">
    <location>
        <begin position="80"/>
        <end position="100"/>
    </location>
</feature>
<feature type="transmembrane region" description="Helical" evidence="3">
    <location>
        <begin position="128"/>
        <end position="148"/>
    </location>
</feature>
<feature type="transmembrane region" description="Helical" evidence="3">
    <location>
        <begin position="159"/>
        <end position="179"/>
    </location>
</feature>
<feature type="transmembrane region" description="Helical" evidence="3">
    <location>
        <begin position="219"/>
        <end position="239"/>
    </location>
</feature>
<feature type="transmembrane region" description="Helical" evidence="3">
    <location>
        <begin position="248"/>
        <end position="268"/>
    </location>
</feature>
<feature type="transmembrane region" description="Helical" evidence="3">
    <location>
        <begin position="273"/>
        <end position="290"/>
    </location>
</feature>
<feature type="topological domain" description="Cytoplasmic" evidence="3">
    <location>
        <begin position="291"/>
        <end position="365"/>
    </location>
</feature>
<feature type="region of interest" description="Disordered" evidence="4">
    <location>
        <begin position="9"/>
        <end position="50"/>
    </location>
</feature>
<feature type="compositionally biased region" description="Polar residues" evidence="4">
    <location>
        <begin position="14"/>
        <end position="28"/>
    </location>
</feature>
<feature type="active site" evidence="1">
    <location>
        <position position="229"/>
    </location>
</feature>
<feature type="active site" evidence="1">
    <location>
        <position position="272"/>
    </location>
</feature>
<feature type="active site" evidence="1">
    <location>
        <position position="276"/>
    </location>
</feature>
<feature type="lipid moiety-binding region" description="S-palmitoyl cysteine" evidence="1">
    <location>
        <position position="331"/>
    </location>
</feature>
<feature type="lipid moiety-binding region" description="S-palmitoyl cysteine" evidence="1">
    <location>
        <position position="332"/>
    </location>
</feature>
<feature type="lipid moiety-binding region" description="S-palmitoyl cysteine" evidence="1">
    <location>
        <position position="343"/>
    </location>
</feature>
<feature type="lipid moiety-binding region" description="S-palmitoyl cysteine" evidence="1">
    <location>
        <position position="348"/>
    </location>
</feature>
<reference key="1">
    <citation type="journal article" date="2005" name="Science">
        <title>The transcriptional landscape of the mammalian genome.</title>
        <authorList>
            <person name="Carninci P."/>
            <person name="Kasukawa T."/>
            <person name="Katayama S."/>
            <person name="Gough J."/>
            <person name="Frith M.C."/>
            <person name="Maeda N."/>
            <person name="Oyama R."/>
            <person name="Ravasi T."/>
            <person name="Lenhard B."/>
            <person name="Wells C."/>
            <person name="Kodzius R."/>
            <person name="Shimokawa K."/>
            <person name="Bajic V.B."/>
            <person name="Brenner S.E."/>
            <person name="Batalov S."/>
            <person name="Forrest A.R."/>
            <person name="Zavolan M."/>
            <person name="Davis M.J."/>
            <person name="Wilming L.G."/>
            <person name="Aidinis V."/>
            <person name="Allen J.E."/>
            <person name="Ambesi-Impiombato A."/>
            <person name="Apweiler R."/>
            <person name="Aturaliya R.N."/>
            <person name="Bailey T.L."/>
            <person name="Bansal M."/>
            <person name="Baxter L."/>
            <person name="Beisel K.W."/>
            <person name="Bersano T."/>
            <person name="Bono H."/>
            <person name="Chalk A.M."/>
            <person name="Chiu K.P."/>
            <person name="Choudhary V."/>
            <person name="Christoffels A."/>
            <person name="Clutterbuck D.R."/>
            <person name="Crowe M.L."/>
            <person name="Dalla E."/>
            <person name="Dalrymple B.P."/>
            <person name="de Bono B."/>
            <person name="Della Gatta G."/>
            <person name="di Bernardo D."/>
            <person name="Down T."/>
            <person name="Engstrom P."/>
            <person name="Fagiolini M."/>
            <person name="Faulkner G."/>
            <person name="Fletcher C.F."/>
            <person name="Fukushima T."/>
            <person name="Furuno M."/>
            <person name="Futaki S."/>
            <person name="Gariboldi M."/>
            <person name="Georgii-Hemming P."/>
            <person name="Gingeras T.R."/>
            <person name="Gojobori T."/>
            <person name="Green R.E."/>
            <person name="Gustincich S."/>
            <person name="Harbers M."/>
            <person name="Hayashi Y."/>
            <person name="Hensch T.K."/>
            <person name="Hirokawa N."/>
            <person name="Hill D."/>
            <person name="Huminiecki L."/>
            <person name="Iacono M."/>
            <person name="Ikeo K."/>
            <person name="Iwama A."/>
            <person name="Ishikawa T."/>
            <person name="Jakt M."/>
            <person name="Kanapin A."/>
            <person name="Katoh M."/>
            <person name="Kawasawa Y."/>
            <person name="Kelso J."/>
            <person name="Kitamura H."/>
            <person name="Kitano H."/>
            <person name="Kollias G."/>
            <person name="Krishnan S.P."/>
            <person name="Kruger A."/>
            <person name="Kummerfeld S.K."/>
            <person name="Kurochkin I.V."/>
            <person name="Lareau L.F."/>
            <person name="Lazarevic D."/>
            <person name="Lipovich L."/>
            <person name="Liu J."/>
            <person name="Liuni S."/>
            <person name="McWilliam S."/>
            <person name="Madan Babu M."/>
            <person name="Madera M."/>
            <person name="Marchionni L."/>
            <person name="Matsuda H."/>
            <person name="Matsuzawa S."/>
            <person name="Miki H."/>
            <person name="Mignone F."/>
            <person name="Miyake S."/>
            <person name="Morris K."/>
            <person name="Mottagui-Tabar S."/>
            <person name="Mulder N."/>
            <person name="Nakano N."/>
            <person name="Nakauchi H."/>
            <person name="Ng P."/>
            <person name="Nilsson R."/>
            <person name="Nishiguchi S."/>
            <person name="Nishikawa S."/>
            <person name="Nori F."/>
            <person name="Ohara O."/>
            <person name="Okazaki Y."/>
            <person name="Orlando V."/>
            <person name="Pang K.C."/>
            <person name="Pavan W.J."/>
            <person name="Pavesi G."/>
            <person name="Pesole G."/>
            <person name="Petrovsky N."/>
            <person name="Piazza S."/>
            <person name="Reed J."/>
            <person name="Reid J.F."/>
            <person name="Ring B.Z."/>
            <person name="Ringwald M."/>
            <person name="Rost B."/>
            <person name="Ruan Y."/>
            <person name="Salzberg S.L."/>
            <person name="Sandelin A."/>
            <person name="Schneider C."/>
            <person name="Schoenbach C."/>
            <person name="Sekiguchi K."/>
            <person name="Semple C.A."/>
            <person name="Seno S."/>
            <person name="Sessa L."/>
            <person name="Sheng Y."/>
            <person name="Shibata Y."/>
            <person name="Shimada H."/>
            <person name="Shimada K."/>
            <person name="Silva D."/>
            <person name="Sinclair B."/>
            <person name="Sperling S."/>
            <person name="Stupka E."/>
            <person name="Sugiura K."/>
            <person name="Sultana R."/>
            <person name="Takenaka Y."/>
            <person name="Taki K."/>
            <person name="Tammoja K."/>
            <person name="Tan S.L."/>
            <person name="Tang S."/>
            <person name="Taylor M.S."/>
            <person name="Tegner J."/>
            <person name="Teichmann S.A."/>
            <person name="Ueda H.R."/>
            <person name="van Nimwegen E."/>
            <person name="Verardo R."/>
            <person name="Wei C.L."/>
            <person name="Yagi K."/>
            <person name="Yamanishi H."/>
            <person name="Zabarovsky E."/>
            <person name="Zhu S."/>
            <person name="Zimmer A."/>
            <person name="Hide W."/>
            <person name="Bult C."/>
            <person name="Grimmond S.M."/>
            <person name="Teasdale R.D."/>
            <person name="Liu E.T."/>
            <person name="Brusic V."/>
            <person name="Quackenbush J."/>
            <person name="Wahlestedt C."/>
            <person name="Mattick J.S."/>
            <person name="Hume D.A."/>
            <person name="Kai C."/>
            <person name="Sasaki D."/>
            <person name="Tomaru Y."/>
            <person name="Fukuda S."/>
            <person name="Kanamori-Katayama M."/>
            <person name="Suzuki M."/>
            <person name="Aoki J."/>
            <person name="Arakawa T."/>
            <person name="Iida J."/>
            <person name="Imamura K."/>
            <person name="Itoh M."/>
            <person name="Kato T."/>
            <person name="Kawaji H."/>
            <person name="Kawagashira N."/>
            <person name="Kawashima T."/>
            <person name="Kojima M."/>
            <person name="Kondo S."/>
            <person name="Konno H."/>
            <person name="Nakano K."/>
            <person name="Ninomiya N."/>
            <person name="Nishio T."/>
            <person name="Okada M."/>
            <person name="Plessy C."/>
            <person name="Shibata K."/>
            <person name="Shiraki T."/>
            <person name="Suzuki S."/>
            <person name="Tagami M."/>
            <person name="Waki K."/>
            <person name="Watahiki A."/>
            <person name="Okamura-Oho Y."/>
            <person name="Suzuki H."/>
            <person name="Kawai J."/>
            <person name="Hayashizaki Y."/>
        </authorList>
    </citation>
    <scope>NUCLEOTIDE SEQUENCE [LARGE SCALE MRNA]</scope>
    <source>
        <strain>C57BL/6J</strain>
        <tissue>Testis</tissue>
    </source>
</reference>
<reference key="2">
    <citation type="journal article" date="2004" name="Genome Res.">
        <title>The status, quality, and expansion of the NIH full-length cDNA project: the Mammalian Gene Collection (MGC).</title>
        <authorList>
            <consortium name="The MGC Project Team"/>
        </authorList>
    </citation>
    <scope>NUCLEOTIDE SEQUENCE [LARGE SCALE MRNA]</scope>
</reference>
<reference key="3">
    <citation type="journal article" date="2004" name="EMBO J.">
        <title>Identification of a family of animal sphingomyelin synthases.</title>
        <authorList>
            <person name="Huitema K."/>
            <person name="Van Den Dikkenberg J."/>
            <person name="Brouwers J.F.H.M."/>
            <person name="Holthuis J.C."/>
        </authorList>
    </citation>
    <scope>IDENTIFICATION</scope>
</reference>
<reference key="4">
    <citation type="journal article" date="2009" name="Circ. Res.">
        <title>Macrophage sphingomyelin synthase 2 deficiency decreases atherosclerosis in mice.</title>
        <authorList>
            <person name="Liu J."/>
            <person name="Huan C."/>
            <person name="Chakraborty M."/>
            <person name="Zhang H."/>
            <person name="Lu D."/>
            <person name="Kuo M.S."/>
            <person name="Cao G."/>
            <person name="Jiang X.C."/>
        </authorList>
    </citation>
    <scope>DISRUPTION PHENOTYPE</scope>
    <scope>TISSUE SPECIFICITY</scope>
    <scope>FUNCTION</scope>
</reference>
<reference key="5">
    <citation type="journal article" date="2011" name="Mol. Cell. Biol.">
        <title>Reducing plasma membrane sphingomyelin increases insulin sensitivity.</title>
        <authorList>
            <person name="Li Z."/>
            <person name="Zhang H."/>
            <person name="Liu J."/>
            <person name="Liang C.P."/>
            <person name="Li Y."/>
            <person name="Li Y."/>
            <person name="Teitelman G."/>
            <person name="Beyer T."/>
            <person name="Bui H.H."/>
            <person name="Peake D.A."/>
            <person name="Zhang Y."/>
            <person name="Sanders P.E."/>
            <person name="Kuo M.S."/>
            <person name="Park T.S."/>
            <person name="Cao G."/>
            <person name="Jiang X.C."/>
        </authorList>
    </citation>
    <scope>DISRUPTION PHENOTYPE</scope>
    <scope>FUNCTION</scope>
</reference>
<reference key="6">
    <citation type="journal article" date="2012" name="Arterioscler. Thromb. Vasc. Biol.">
        <title>Impact of sphingomyelin synthase 1 deficiency on sphingolipid metabolism and atherosclerosis in mice.</title>
        <authorList>
            <person name="Li Z."/>
            <person name="Fan Y."/>
            <person name="Liu J."/>
            <person name="Li Y."/>
            <person name="Huan C."/>
            <person name="Bui H.H."/>
            <person name="Kuo M.S."/>
            <person name="Park T.S."/>
            <person name="Cao G."/>
            <person name="Jiang X.C."/>
        </authorList>
    </citation>
    <scope>DISRUPTION PHENOTYPE</scope>
    <scope>FUNCTION</scope>
    <scope>CATALYTIC ACTIVITY</scope>
</reference>
<reference key="7">
    <citation type="journal article" date="2012" name="Nutr. Metab.">
        <title>Mechanisms involved in cellular ceramide homeostasis.</title>
        <authorList>
            <person name="Hussain M.M."/>
            <person name="Jin W."/>
            <person name="Jiang X.C."/>
        </authorList>
    </citation>
    <scope>REVIEW</scope>
</reference>
<reference key="8">
    <citation type="journal article" date="2015" name="J. Lipid Res.">
        <title>All members in the sphingomyelin synthase gene family have ceramide phosphoethanolamine synthase activity.</title>
        <authorList>
            <person name="Ding T."/>
            <person name="Kabir I."/>
            <person name="Li Y."/>
            <person name="Lou C."/>
            <person name="Yazdanyar A."/>
            <person name="Xu J."/>
            <person name="Dong J."/>
            <person name="Zhou H."/>
            <person name="Park T."/>
            <person name="Boutjdir M."/>
            <person name="Li Z."/>
            <person name="Jiang X.C."/>
        </authorList>
    </citation>
    <scope>FUNCTION</scope>
    <scope>CATALYTIC ACTIVITY</scope>
</reference>
<reference key="9">
    <citation type="journal article" date="2019" name="JCI Insight">
        <title>Osteoporosis and skeletal dysplasia caused by pathogenic variants in SGMS2.</title>
        <authorList>
            <person name="Pekkinen M."/>
            <person name="Terhal P.A."/>
            <person name="Botto L.D."/>
            <person name="Henning P."/>
            <person name="Maekitie R.E."/>
            <person name="Roschger P."/>
            <person name="Jain A."/>
            <person name="Kol M."/>
            <person name="Kjellberg M.A."/>
            <person name="Paschalis E.P."/>
            <person name="van Gassen K."/>
            <person name="Murray M."/>
            <person name="Bayrak-Toydemir P."/>
            <person name="Magnusson M.K."/>
            <person name="Jans J."/>
            <person name="Kausar M."/>
            <person name="Carey J.C."/>
            <person name="Somerharju P."/>
            <person name="Lerner U.H."/>
            <person name="Olkkonen V.M."/>
            <person name="Klaushofer K."/>
            <person name="Holthuis J.C."/>
            <person name="Maekitie O."/>
        </authorList>
    </citation>
    <scope>TISSUE SPECIFICITY</scope>
</reference>